<proteinExistence type="inferred from homology"/>
<evidence type="ECO:0000255" key="1">
    <source>
        <dbReference type="HAMAP-Rule" id="MF_00082"/>
    </source>
</evidence>
<comment type="function">
    <text evidence="1">Catalyzes the ATP-dependent phosphorylation of N-acetyl-L-glutamate.</text>
</comment>
<comment type="catalytic activity">
    <reaction evidence="1">
        <text>N-acetyl-L-glutamate + ATP = N-acetyl-L-glutamyl 5-phosphate + ADP</text>
        <dbReference type="Rhea" id="RHEA:14629"/>
        <dbReference type="ChEBI" id="CHEBI:30616"/>
        <dbReference type="ChEBI" id="CHEBI:44337"/>
        <dbReference type="ChEBI" id="CHEBI:57936"/>
        <dbReference type="ChEBI" id="CHEBI:456216"/>
        <dbReference type="EC" id="2.7.2.8"/>
    </reaction>
</comment>
<comment type="pathway">
    <text evidence="1">Amino-acid biosynthesis; L-arginine biosynthesis; N(2)-acetyl-L-ornithine from L-glutamate: step 2/4.</text>
</comment>
<comment type="subcellular location">
    <subcellularLocation>
        <location evidence="1">Cytoplasm</location>
    </subcellularLocation>
</comment>
<comment type="similarity">
    <text evidence="1">Belongs to the acetylglutamate kinase family. ArgB subfamily.</text>
</comment>
<sequence>MQKYLEKANVLIEALPYIRKFNSKIILIKYGGSAMENEELKHCVMQDIALLKLVGLKPIIVHGGGKDISAMCEKLGVKSEFKNGLRVSDKATTEVASMVLNHINKNLVHSLQNLGVKAIGLCGKDGALLECVKKDENLAFVGTIQKVNSKILEELLEKDFLPIIAPIGMDEDFNTYNINADDAACAIAKALRAEKLAFLTDTAGLYEDFNDKNSLISKISLEQAKILAPKIEGGMHVKLKSCIDACENGVKKVHILDGRVKHSLLLEFFTDEGIGTLVG</sequence>
<name>ARGB_CAMJD</name>
<dbReference type="EC" id="2.7.2.8" evidence="1"/>
<dbReference type="EMBL" id="CP000768">
    <property type="protein sequence ID" value="ABS44799.1"/>
    <property type="molecule type" value="Genomic_DNA"/>
</dbReference>
<dbReference type="SMR" id="A7H1S5"/>
<dbReference type="KEGG" id="cjd:JJD26997_0224"/>
<dbReference type="HOGENOM" id="CLU_053680_0_0_7"/>
<dbReference type="UniPathway" id="UPA00068">
    <property type="reaction ID" value="UER00107"/>
</dbReference>
<dbReference type="Proteomes" id="UP000002302">
    <property type="component" value="Chromosome"/>
</dbReference>
<dbReference type="GO" id="GO:0005737">
    <property type="term" value="C:cytoplasm"/>
    <property type="evidence" value="ECO:0007669"/>
    <property type="project" value="UniProtKB-SubCell"/>
</dbReference>
<dbReference type="GO" id="GO:0003991">
    <property type="term" value="F:acetylglutamate kinase activity"/>
    <property type="evidence" value="ECO:0007669"/>
    <property type="project" value="UniProtKB-UniRule"/>
</dbReference>
<dbReference type="GO" id="GO:0005524">
    <property type="term" value="F:ATP binding"/>
    <property type="evidence" value="ECO:0007669"/>
    <property type="project" value="UniProtKB-UniRule"/>
</dbReference>
<dbReference type="GO" id="GO:0042450">
    <property type="term" value="P:arginine biosynthetic process via ornithine"/>
    <property type="evidence" value="ECO:0007669"/>
    <property type="project" value="UniProtKB-UniRule"/>
</dbReference>
<dbReference type="GO" id="GO:0006526">
    <property type="term" value="P:L-arginine biosynthetic process"/>
    <property type="evidence" value="ECO:0007669"/>
    <property type="project" value="UniProtKB-UniPathway"/>
</dbReference>
<dbReference type="CDD" id="cd04250">
    <property type="entry name" value="AAK_NAGK-C"/>
    <property type="match status" value="1"/>
</dbReference>
<dbReference type="FunFam" id="3.40.1160.10:FF:000004">
    <property type="entry name" value="Acetylglutamate kinase"/>
    <property type="match status" value="1"/>
</dbReference>
<dbReference type="Gene3D" id="3.40.1160.10">
    <property type="entry name" value="Acetylglutamate kinase-like"/>
    <property type="match status" value="1"/>
</dbReference>
<dbReference type="HAMAP" id="MF_00082">
    <property type="entry name" value="ArgB"/>
    <property type="match status" value="1"/>
</dbReference>
<dbReference type="InterPro" id="IPR036393">
    <property type="entry name" value="AceGlu_kinase-like_sf"/>
</dbReference>
<dbReference type="InterPro" id="IPR004662">
    <property type="entry name" value="AcgluKinase_fam"/>
</dbReference>
<dbReference type="InterPro" id="IPR037528">
    <property type="entry name" value="ArgB"/>
</dbReference>
<dbReference type="InterPro" id="IPR001048">
    <property type="entry name" value="Asp/Glu/Uridylate_kinase"/>
</dbReference>
<dbReference type="InterPro" id="IPR001057">
    <property type="entry name" value="Glu/AcGlu_kinase"/>
</dbReference>
<dbReference type="InterPro" id="IPR041727">
    <property type="entry name" value="NAGK-C"/>
</dbReference>
<dbReference type="NCBIfam" id="TIGR00761">
    <property type="entry name" value="argB"/>
    <property type="match status" value="1"/>
</dbReference>
<dbReference type="PANTHER" id="PTHR23342">
    <property type="entry name" value="N-ACETYLGLUTAMATE SYNTHASE"/>
    <property type="match status" value="1"/>
</dbReference>
<dbReference type="PANTHER" id="PTHR23342:SF0">
    <property type="entry name" value="N-ACETYLGLUTAMATE SYNTHASE, MITOCHONDRIAL"/>
    <property type="match status" value="1"/>
</dbReference>
<dbReference type="Pfam" id="PF00696">
    <property type="entry name" value="AA_kinase"/>
    <property type="match status" value="1"/>
</dbReference>
<dbReference type="PIRSF" id="PIRSF000728">
    <property type="entry name" value="NAGK"/>
    <property type="match status" value="1"/>
</dbReference>
<dbReference type="PRINTS" id="PR00474">
    <property type="entry name" value="GLU5KINASE"/>
</dbReference>
<dbReference type="SUPFAM" id="SSF53633">
    <property type="entry name" value="Carbamate kinase-like"/>
    <property type="match status" value="1"/>
</dbReference>
<protein>
    <recommendedName>
        <fullName evidence="1">Acetylglutamate kinase</fullName>
        <ecNumber evidence="1">2.7.2.8</ecNumber>
    </recommendedName>
    <alternativeName>
        <fullName evidence="1">N-acetyl-L-glutamate 5-phosphotransferase</fullName>
    </alternativeName>
    <alternativeName>
        <fullName evidence="1">NAG kinase</fullName>
        <shortName evidence="1">NAGK</shortName>
    </alternativeName>
</protein>
<feature type="chain" id="PRO_1000010495" description="Acetylglutamate kinase">
    <location>
        <begin position="1"/>
        <end position="279"/>
    </location>
</feature>
<feature type="binding site" evidence="1">
    <location>
        <begin position="64"/>
        <end position="65"/>
    </location>
    <ligand>
        <name>substrate</name>
    </ligand>
</feature>
<feature type="binding site" evidence="1">
    <location>
        <position position="86"/>
    </location>
    <ligand>
        <name>substrate</name>
    </ligand>
</feature>
<feature type="binding site" evidence="1">
    <location>
        <position position="177"/>
    </location>
    <ligand>
        <name>substrate</name>
    </ligand>
</feature>
<feature type="site" description="Transition state stabilizer" evidence="1">
    <location>
        <position position="29"/>
    </location>
</feature>
<feature type="site" description="Transition state stabilizer" evidence="1">
    <location>
        <position position="238"/>
    </location>
</feature>
<reference key="1">
    <citation type="submission" date="2007-07" db="EMBL/GenBank/DDBJ databases">
        <title>Complete genome sequence of Campylobacter jejuni subsp doylei 269.97 isolated from human blood.</title>
        <authorList>
            <person name="Fouts D.E."/>
            <person name="Mongodin E.F."/>
            <person name="Puiu D."/>
            <person name="Sebastian Y."/>
            <person name="Miller W.G."/>
            <person name="Mandrell R.E."/>
            <person name="Lastovica A.J."/>
            <person name="Nelson K.E."/>
        </authorList>
    </citation>
    <scope>NUCLEOTIDE SEQUENCE [LARGE SCALE GENOMIC DNA]</scope>
    <source>
        <strain>ATCC BAA-1458 / RM4099 / 269.97</strain>
    </source>
</reference>
<keyword id="KW-0028">Amino-acid biosynthesis</keyword>
<keyword id="KW-0055">Arginine biosynthesis</keyword>
<keyword id="KW-0067">ATP-binding</keyword>
<keyword id="KW-0963">Cytoplasm</keyword>
<keyword id="KW-0418">Kinase</keyword>
<keyword id="KW-0547">Nucleotide-binding</keyword>
<keyword id="KW-0808">Transferase</keyword>
<accession>A7H1S5</accession>
<organism>
    <name type="scientific">Campylobacter jejuni subsp. doylei (strain ATCC BAA-1458 / RM4099 / 269.97)</name>
    <dbReference type="NCBI Taxonomy" id="360109"/>
    <lineage>
        <taxon>Bacteria</taxon>
        <taxon>Pseudomonadati</taxon>
        <taxon>Campylobacterota</taxon>
        <taxon>Epsilonproteobacteria</taxon>
        <taxon>Campylobacterales</taxon>
        <taxon>Campylobacteraceae</taxon>
        <taxon>Campylobacter</taxon>
    </lineage>
</organism>
<gene>
    <name evidence="1" type="primary">argB</name>
    <name type="ordered locus">JJD26997_0224</name>
</gene>